<gene>
    <name type="primary">RPS14</name>
</gene>
<comment type="similarity">
    <text evidence="2">Belongs to the universal ribosomal protein uS11 family.</text>
</comment>
<evidence type="ECO:0000256" key="1">
    <source>
        <dbReference type="SAM" id="MobiDB-lite"/>
    </source>
</evidence>
<evidence type="ECO:0000305" key="2"/>
<name>RS14_CANAX</name>
<sequence>MYYTSYRSQVFGVARIFASFNDTFVHVTDLSGKETIARVTGGMKVKADRDESSPYAAMLAAQDVAAKCKEVGITAVHIKLRATGGTKTKTPGPGGQSALRALARSGLRIGRIEDVTPVPSDSTRRKGGRRGRRL</sequence>
<dbReference type="EMBL" id="AF365406">
    <property type="protein sequence ID" value="AAK60142.1"/>
    <property type="molecule type" value="Genomic_DNA"/>
</dbReference>
<dbReference type="SMR" id="Q96W53"/>
<dbReference type="EnsemblFungi" id="C1_06450C_A-T">
    <property type="protein sequence ID" value="C1_06450C_A-T-p1"/>
    <property type="gene ID" value="C1_06450C_A"/>
</dbReference>
<dbReference type="VEuPathDB" id="FungiDB:C1_06450C_A"/>
<dbReference type="VEuPathDB" id="FungiDB:CAWG_00766"/>
<dbReference type="GO" id="GO:1990904">
    <property type="term" value="C:ribonucleoprotein complex"/>
    <property type="evidence" value="ECO:0007669"/>
    <property type="project" value="UniProtKB-KW"/>
</dbReference>
<dbReference type="GO" id="GO:0005840">
    <property type="term" value="C:ribosome"/>
    <property type="evidence" value="ECO:0007669"/>
    <property type="project" value="UniProtKB-KW"/>
</dbReference>
<dbReference type="GO" id="GO:0003735">
    <property type="term" value="F:structural constituent of ribosome"/>
    <property type="evidence" value="ECO:0007669"/>
    <property type="project" value="InterPro"/>
</dbReference>
<dbReference type="GO" id="GO:0006412">
    <property type="term" value="P:translation"/>
    <property type="evidence" value="ECO:0007669"/>
    <property type="project" value="InterPro"/>
</dbReference>
<dbReference type="FunFam" id="3.30.420.80:FF:000002">
    <property type="entry name" value="40S ribosomal protein S14"/>
    <property type="match status" value="1"/>
</dbReference>
<dbReference type="Gene3D" id="3.30.420.80">
    <property type="entry name" value="Ribosomal protein S11"/>
    <property type="match status" value="1"/>
</dbReference>
<dbReference type="HAMAP" id="MF_01310">
    <property type="entry name" value="Ribosomal_uS11"/>
    <property type="match status" value="1"/>
</dbReference>
<dbReference type="InterPro" id="IPR001971">
    <property type="entry name" value="Ribosomal_uS11"/>
</dbReference>
<dbReference type="InterPro" id="IPR018102">
    <property type="entry name" value="Ribosomal_uS11_CS"/>
</dbReference>
<dbReference type="InterPro" id="IPR036967">
    <property type="entry name" value="Ribosomal_uS11_sf"/>
</dbReference>
<dbReference type="NCBIfam" id="NF007176">
    <property type="entry name" value="PRK09607.1"/>
    <property type="match status" value="1"/>
</dbReference>
<dbReference type="PANTHER" id="PTHR11759">
    <property type="entry name" value="40S RIBOSOMAL PROTEIN S14/30S RIBOSOMAL PROTEIN S11"/>
    <property type="match status" value="1"/>
</dbReference>
<dbReference type="Pfam" id="PF00411">
    <property type="entry name" value="Ribosomal_S11"/>
    <property type="match status" value="1"/>
</dbReference>
<dbReference type="PIRSF" id="PIRSF002131">
    <property type="entry name" value="Ribosomal_S11"/>
    <property type="match status" value="1"/>
</dbReference>
<dbReference type="SUPFAM" id="SSF53137">
    <property type="entry name" value="Translational machinery components"/>
    <property type="match status" value="1"/>
</dbReference>
<dbReference type="PROSITE" id="PS00054">
    <property type="entry name" value="RIBOSOMAL_S11"/>
    <property type="match status" value="1"/>
</dbReference>
<reference key="1">
    <citation type="submission" date="2001-03" db="EMBL/GenBank/DDBJ databases">
        <title>Evolution of ribosomal protein S14 gene structure: Candida albicans, Schizosaccharomyces pombe, and selected ascomycetous fungi.</title>
        <authorList>
            <person name="Burke T.J."/>
            <person name="Rhoads D.D."/>
        </authorList>
    </citation>
    <scope>NUCLEOTIDE SEQUENCE [GENOMIC DNA]</scope>
    <source>
        <strain>B207</strain>
    </source>
</reference>
<feature type="chain" id="PRO_0000123355" description="Small ribosomal subunit protein uS11">
    <location>
        <begin position="1"/>
        <end position="134"/>
    </location>
</feature>
<feature type="region of interest" description="Disordered" evidence="1">
    <location>
        <begin position="114"/>
        <end position="134"/>
    </location>
</feature>
<feature type="compositionally biased region" description="Basic residues" evidence="1">
    <location>
        <begin position="125"/>
        <end position="134"/>
    </location>
</feature>
<organism>
    <name type="scientific">Candida albicans</name>
    <name type="common">Yeast</name>
    <dbReference type="NCBI Taxonomy" id="5476"/>
    <lineage>
        <taxon>Eukaryota</taxon>
        <taxon>Fungi</taxon>
        <taxon>Dikarya</taxon>
        <taxon>Ascomycota</taxon>
        <taxon>Saccharomycotina</taxon>
        <taxon>Pichiomycetes</taxon>
        <taxon>Debaryomycetaceae</taxon>
        <taxon>Candida/Lodderomyces clade</taxon>
        <taxon>Candida</taxon>
    </lineage>
</organism>
<protein>
    <recommendedName>
        <fullName evidence="2">Small ribosomal subunit protein uS11</fullName>
    </recommendedName>
    <alternativeName>
        <fullName>40S ribosomal protein S14</fullName>
    </alternativeName>
</protein>
<proteinExistence type="inferred from homology"/>
<keyword id="KW-0687">Ribonucleoprotein</keyword>
<keyword id="KW-0689">Ribosomal protein</keyword>
<accession>Q96W53</accession>